<sequence>MNTLQAIVLAVIEGITEFLPVSSTGHMIIASSFFGIAHEDFTKLFTIVIQLGAILSVVVLYFKRFFQTLDFYFKLLVAFIPAVVLGLLLSDFIDGLLENPVTVAVSLLIGGLILLKVDEWFNNPNAAETSQKITYLQALKIGLFQCIAMIPGVSRSGASIVGGMSQKLSRTTAAEFSFFLAVPTMLGATVKKCYDYYKAGFELSHDQVNILIIGNVVAFIVALLAIKTFISFLTKNGFKVFGYYRIIAGIILLLIHFFIHPLTII</sequence>
<name>UPPP_FLAJ1</name>
<evidence type="ECO:0000250" key="1"/>
<evidence type="ECO:0000255" key="2"/>
<evidence type="ECO:0000305" key="3"/>
<keyword id="KW-0046">Antibiotic resistance</keyword>
<keyword id="KW-0997">Cell inner membrane</keyword>
<keyword id="KW-1003">Cell membrane</keyword>
<keyword id="KW-0133">Cell shape</keyword>
<keyword id="KW-0961">Cell wall biogenesis/degradation</keyword>
<keyword id="KW-0378">Hydrolase</keyword>
<keyword id="KW-0472">Membrane</keyword>
<keyword id="KW-0573">Peptidoglycan synthesis</keyword>
<keyword id="KW-0812">Transmembrane</keyword>
<keyword id="KW-1133">Transmembrane helix</keyword>
<feature type="chain" id="PRO_0000151142" description="Undecaprenyl-diphosphatase">
    <location>
        <begin position="1"/>
        <end position="265"/>
    </location>
</feature>
<feature type="transmembrane region" description="Helical" evidence="2">
    <location>
        <begin position="18"/>
        <end position="38"/>
    </location>
</feature>
<feature type="transmembrane region" description="Helical" evidence="2">
    <location>
        <begin position="41"/>
        <end position="61"/>
    </location>
</feature>
<feature type="transmembrane region" description="Helical" evidence="2">
    <location>
        <begin position="69"/>
        <end position="89"/>
    </location>
</feature>
<feature type="transmembrane region" description="Helical" evidence="2">
    <location>
        <begin position="95"/>
        <end position="115"/>
    </location>
</feature>
<feature type="transmembrane region" description="Helical" evidence="2">
    <location>
        <begin position="133"/>
        <end position="153"/>
    </location>
</feature>
<feature type="transmembrane region" description="Helical" evidence="2">
    <location>
        <begin position="171"/>
        <end position="191"/>
    </location>
</feature>
<feature type="transmembrane region" description="Helical" evidence="2">
    <location>
        <begin position="210"/>
        <end position="230"/>
    </location>
</feature>
<feature type="transmembrane region" description="Helical" evidence="2">
    <location>
        <begin position="245"/>
        <end position="265"/>
    </location>
</feature>
<comment type="function">
    <text evidence="1">Catalyzes the dephosphorylation of undecaprenyl diphosphate (UPP). Confers resistance to bacitracin (By similarity).</text>
</comment>
<comment type="catalytic activity">
    <reaction>
        <text>di-trans,octa-cis-undecaprenyl diphosphate + H2O = di-trans,octa-cis-undecaprenyl phosphate + phosphate + H(+)</text>
        <dbReference type="Rhea" id="RHEA:28094"/>
        <dbReference type="ChEBI" id="CHEBI:15377"/>
        <dbReference type="ChEBI" id="CHEBI:15378"/>
        <dbReference type="ChEBI" id="CHEBI:43474"/>
        <dbReference type="ChEBI" id="CHEBI:58405"/>
        <dbReference type="ChEBI" id="CHEBI:60392"/>
        <dbReference type="EC" id="3.6.1.27"/>
    </reaction>
</comment>
<comment type="subcellular location">
    <subcellularLocation>
        <location evidence="1">Cell inner membrane</location>
        <topology evidence="1">Multi-pass membrane protein</topology>
    </subcellularLocation>
</comment>
<comment type="miscellaneous">
    <text>Bacitracin is thought to be involved in the inhibition of peptidoglycan synthesis by sequestering undecaprenyl diphosphate, thereby reducing the pool of lipid carrier available.</text>
</comment>
<comment type="similarity">
    <text evidence="3">Belongs to the UppP family.</text>
</comment>
<gene>
    <name type="primary">uppP</name>
    <name type="synonym">bacA</name>
    <name type="synonym">upk</name>
    <name type="ordered locus">Fjoh_0569</name>
</gene>
<reference key="1">
    <citation type="journal article" date="2000" name="J. Bacteriol.">
        <title>Transposon insertions in the Flavobacterium johnsoniae ftsX gene disrupt gliding motility and cell division.</title>
        <authorList>
            <person name="Kempf M.J."/>
            <person name="McBride M.J."/>
        </authorList>
    </citation>
    <scope>NUCLEOTIDE SEQUENCE [GENOMIC DNA]</scope>
</reference>
<reference key="2">
    <citation type="journal article" date="2009" name="Appl. Environ. Microbiol.">
        <title>Novel features of the polysaccharide-digesting gliding bacterium Flavobacterium johnsoniae as revealed by genome sequence analysis.</title>
        <authorList>
            <person name="McBride M.J."/>
            <person name="Xie G."/>
            <person name="Martens E.C."/>
            <person name="Lapidus A."/>
            <person name="Henrissat B."/>
            <person name="Rhodes R.G."/>
            <person name="Goltsman E."/>
            <person name="Wang W."/>
            <person name="Xu J."/>
            <person name="Hunnicutt D.W."/>
            <person name="Staroscik A.M."/>
            <person name="Hoover T.R."/>
            <person name="Cheng Y.Q."/>
            <person name="Stein J.L."/>
        </authorList>
    </citation>
    <scope>NUCLEOTIDE SEQUENCE [LARGE SCALE GENOMIC DNA]</scope>
    <source>
        <strain>ATCC 17061 / DSM 2064 / JCM 8514 / BCRC 14874 / CCUG 350202 / NBRC 14942 / NCIMB 11054 / UW101</strain>
    </source>
</reference>
<protein>
    <recommendedName>
        <fullName>Undecaprenyl-diphosphatase</fullName>
        <ecNumber>3.6.1.27</ecNumber>
    </recommendedName>
    <alternativeName>
        <fullName>Bacitracin resistance protein</fullName>
    </alternativeName>
    <alternativeName>
        <fullName>Undecaprenyl pyrophosphate phosphatase</fullName>
    </alternativeName>
</protein>
<accession>Q9RB37</accession>
<accession>A5FMG6</accession>
<dbReference type="EC" id="3.6.1.27"/>
<dbReference type="EMBL" id="AF169967">
    <property type="protein sequence ID" value="AAD50462.1"/>
    <property type="molecule type" value="Genomic_DNA"/>
</dbReference>
<dbReference type="EMBL" id="CP000685">
    <property type="protein sequence ID" value="ABQ03604.1"/>
    <property type="molecule type" value="Genomic_DNA"/>
</dbReference>
<dbReference type="RefSeq" id="WP_012022660.1">
    <property type="nucleotide sequence ID" value="NC_009441.1"/>
</dbReference>
<dbReference type="SMR" id="Q9RB37"/>
<dbReference type="STRING" id="376686.Fjoh_0569"/>
<dbReference type="KEGG" id="fjo:Fjoh_0569"/>
<dbReference type="eggNOG" id="COG1968">
    <property type="taxonomic scope" value="Bacteria"/>
</dbReference>
<dbReference type="HOGENOM" id="CLU_060296_2_0_10"/>
<dbReference type="OrthoDB" id="9808289at2"/>
<dbReference type="Proteomes" id="UP000006694">
    <property type="component" value="Chromosome"/>
</dbReference>
<dbReference type="GO" id="GO:0005886">
    <property type="term" value="C:plasma membrane"/>
    <property type="evidence" value="ECO:0007669"/>
    <property type="project" value="UniProtKB-SubCell"/>
</dbReference>
<dbReference type="GO" id="GO:0050380">
    <property type="term" value="F:undecaprenyl-diphosphatase activity"/>
    <property type="evidence" value="ECO:0007669"/>
    <property type="project" value="UniProtKB-UniRule"/>
</dbReference>
<dbReference type="GO" id="GO:0071555">
    <property type="term" value="P:cell wall organization"/>
    <property type="evidence" value="ECO:0007669"/>
    <property type="project" value="UniProtKB-KW"/>
</dbReference>
<dbReference type="GO" id="GO:0009252">
    <property type="term" value="P:peptidoglycan biosynthetic process"/>
    <property type="evidence" value="ECO:0007669"/>
    <property type="project" value="UniProtKB-KW"/>
</dbReference>
<dbReference type="GO" id="GO:0008360">
    <property type="term" value="P:regulation of cell shape"/>
    <property type="evidence" value="ECO:0007669"/>
    <property type="project" value="UniProtKB-KW"/>
</dbReference>
<dbReference type="GO" id="GO:0046677">
    <property type="term" value="P:response to antibiotic"/>
    <property type="evidence" value="ECO:0007669"/>
    <property type="project" value="UniProtKB-UniRule"/>
</dbReference>
<dbReference type="HAMAP" id="MF_01006">
    <property type="entry name" value="Undec_diphosphatase"/>
    <property type="match status" value="1"/>
</dbReference>
<dbReference type="InterPro" id="IPR003824">
    <property type="entry name" value="UppP"/>
</dbReference>
<dbReference type="NCBIfam" id="NF001389">
    <property type="entry name" value="PRK00281.1-2"/>
    <property type="match status" value="1"/>
</dbReference>
<dbReference type="NCBIfam" id="NF001390">
    <property type="entry name" value="PRK00281.1-4"/>
    <property type="match status" value="1"/>
</dbReference>
<dbReference type="NCBIfam" id="TIGR00753">
    <property type="entry name" value="undec_PP_bacA"/>
    <property type="match status" value="1"/>
</dbReference>
<dbReference type="PANTHER" id="PTHR30622">
    <property type="entry name" value="UNDECAPRENYL-DIPHOSPHATASE"/>
    <property type="match status" value="1"/>
</dbReference>
<dbReference type="PANTHER" id="PTHR30622:SF3">
    <property type="entry name" value="UNDECAPRENYL-DIPHOSPHATASE"/>
    <property type="match status" value="1"/>
</dbReference>
<dbReference type="Pfam" id="PF02673">
    <property type="entry name" value="BacA"/>
    <property type="match status" value="1"/>
</dbReference>
<organism>
    <name type="scientific">Flavobacterium johnsoniae (strain ATCC 17061 / DSM 2064 / JCM 8514 / BCRC 14874 / CCUG 350202 / NBRC 14942 / NCIMB 11054 / UW101)</name>
    <name type="common">Cytophaga johnsonae</name>
    <dbReference type="NCBI Taxonomy" id="376686"/>
    <lineage>
        <taxon>Bacteria</taxon>
        <taxon>Pseudomonadati</taxon>
        <taxon>Bacteroidota</taxon>
        <taxon>Flavobacteriia</taxon>
        <taxon>Flavobacteriales</taxon>
        <taxon>Flavobacteriaceae</taxon>
        <taxon>Flavobacterium</taxon>
    </lineage>
</organism>
<proteinExistence type="inferred from homology"/>